<name>RS4_LACLS</name>
<evidence type="ECO:0000255" key="1">
    <source>
        <dbReference type="HAMAP-Rule" id="MF_01306"/>
    </source>
</evidence>
<evidence type="ECO:0000305" key="2"/>
<organism>
    <name type="scientific">Lactococcus lactis subsp. cremoris (strain SK11)</name>
    <dbReference type="NCBI Taxonomy" id="272622"/>
    <lineage>
        <taxon>Bacteria</taxon>
        <taxon>Bacillati</taxon>
        <taxon>Bacillota</taxon>
        <taxon>Bacilli</taxon>
        <taxon>Lactobacillales</taxon>
        <taxon>Streptococcaceae</taxon>
        <taxon>Lactococcus</taxon>
        <taxon>Lactococcus cremoris subsp. cremoris</taxon>
    </lineage>
</organism>
<protein>
    <recommendedName>
        <fullName evidence="1">Small ribosomal subunit protein uS4</fullName>
    </recommendedName>
    <alternativeName>
        <fullName evidence="2">30S ribosomal protein S4</fullName>
    </alternativeName>
</protein>
<comment type="function">
    <text evidence="1">One of the primary rRNA binding proteins, it binds directly to 16S rRNA where it nucleates assembly of the body of the 30S subunit.</text>
</comment>
<comment type="function">
    <text evidence="1">With S5 and S12 plays an important role in translational accuracy.</text>
</comment>
<comment type="subunit">
    <text evidence="1">Part of the 30S ribosomal subunit. Contacts protein S5. The interaction surface between S4 and S5 is involved in control of translational fidelity.</text>
</comment>
<comment type="similarity">
    <text evidence="1">Belongs to the universal ribosomal protein uS4 family.</text>
</comment>
<accession>Q032G4</accession>
<feature type="chain" id="PRO_0000293300" description="Small ribosomal subunit protein uS4">
    <location>
        <begin position="1"/>
        <end position="203"/>
    </location>
</feature>
<feature type="domain" description="S4 RNA-binding" evidence="1">
    <location>
        <begin position="93"/>
        <end position="156"/>
    </location>
</feature>
<reference key="1">
    <citation type="journal article" date="2006" name="Proc. Natl. Acad. Sci. U.S.A.">
        <title>Comparative genomics of the lactic acid bacteria.</title>
        <authorList>
            <person name="Makarova K.S."/>
            <person name="Slesarev A."/>
            <person name="Wolf Y.I."/>
            <person name="Sorokin A."/>
            <person name="Mirkin B."/>
            <person name="Koonin E.V."/>
            <person name="Pavlov A."/>
            <person name="Pavlova N."/>
            <person name="Karamychev V."/>
            <person name="Polouchine N."/>
            <person name="Shakhova V."/>
            <person name="Grigoriev I."/>
            <person name="Lou Y."/>
            <person name="Rohksar D."/>
            <person name="Lucas S."/>
            <person name="Huang K."/>
            <person name="Goodstein D.M."/>
            <person name="Hawkins T."/>
            <person name="Plengvidhya V."/>
            <person name="Welker D."/>
            <person name="Hughes J."/>
            <person name="Goh Y."/>
            <person name="Benson A."/>
            <person name="Baldwin K."/>
            <person name="Lee J.-H."/>
            <person name="Diaz-Muniz I."/>
            <person name="Dosti B."/>
            <person name="Smeianov V."/>
            <person name="Wechter W."/>
            <person name="Barabote R."/>
            <person name="Lorca G."/>
            <person name="Altermann E."/>
            <person name="Barrangou R."/>
            <person name="Ganesan B."/>
            <person name="Xie Y."/>
            <person name="Rawsthorne H."/>
            <person name="Tamir D."/>
            <person name="Parker C."/>
            <person name="Breidt F."/>
            <person name="Broadbent J.R."/>
            <person name="Hutkins R."/>
            <person name="O'Sullivan D."/>
            <person name="Steele J."/>
            <person name="Unlu G."/>
            <person name="Saier M.H. Jr."/>
            <person name="Klaenhammer T."/>
            <person name="Richardson P."/>
            <person name="Kozyavkin S."/>
            <person name="Weimer B.C."/>
            <person name="Mills D.A."/>
        </authorList>
    </citation>
    <scope>NUCLEOTIDE SEQUENCE [LARGE SCALE GENOMIC DNA]</scope>
    <source>
        <strain>SK11</strain>
    </source>
</reference>
<sequence length="203" mass="23197">MSRYTGPSWKQSRRYGISLTGSGKEIARRNYVPGQHGPNNRSKLSEYGLQLAEKQKLRFTYGLSERQFRNLYVAATKVKEGTVGYNFMTLLEQRLDNVVYRLGLATTRRQARQFVNHGHILVDGKRVDIPSFRVQPGQVISVREKSMKVPAILEAVEATKGRANFVSFDADKLEGTLVRLPERDEINPEINDALIVEFYNKMM</sequence>
<keyword id="KW-0687">Ribonucleoprotein</keyword>
<keyword id="KW-0689">Ribosomal protein</keyword>
<keyword id="KW-0694">RNA-binding</keyword>
<keyword id="KW-0699">rRNA-binding</keyword>
<dbReference type="EMBL" id="CP000425">
    <property type="protein sequence ID" value="ABJ71908.1"/>
    <property type="molecule type" value="Genomic_DNA"/>
</dbReference>
<dbReference type="RefSeq" id="WP_011675319.1">
    <property type="nucleotide sequence ID" value="NC_008527.1"/>
</dbReference>
<dbReference type="SMR" id="Q032G4"/>
<dbReference type="GeneID" id="61108605"/>
<dbReference type="KEGG" id="llc:LACR_0300"/>
<dbReference type="HOGENOM" id="CLU_092403_0_1_9"/>
<dbReference type="Proteomes" id="UP000000240">
    <property type="component" value="Chromosome"/>
</dbReference>
<dbReference type="GO" id="GO:0015935">
    <property type="term" value="C:small ribosomal subunit"/>
    <property type="evidence" value="ECO:0007669"/>
    <property type="project" value="InterPro"/>
</dbReference>
<dbReference type="GO" id="GO:0019843">
    <property type="term" value="F:rRNA binding"/>
    <property type="evidence" value="ECO:0007669"/>
    <property type="project" value="UniProtKB-UniRule"/>
</dbReference>
<dbReference type="GO" id="GO:0003735">
    <property type="term" value="F:structural constituent of ribosome"/>
    <property type="evidence" value="ECO:0007669"/>
    <property type="project" value="InterPro"/>
</dbReference>
<dbReference type="GO" id="GO:0042274">
    <property type="term" value="P:ribosomal small subunit biogenesis"/>
    <property type="evidence" value="ECO:0007669"/>
    <property type="project" value="TreeGrafter"/>
</dbReference>
<dbReference type="GO" id="GO:0006412">
    <property type="term" value="P:translation"/>
    <property type="evidence" value="ECO:0007669"/>
    <property type="project" value="UniProtKB-UniRule"/>
</dbReference>
<dbReference type="CDD" id="cd00165">
    <property type="entry name" value="S4"/>
    <property type="match status" value="1"/>
</dbReference>
<dbReference type="FunFam" id="1.10.1050.10:FF:000001">
    <property type="entry name" value="30S ribosomal protein S4"/>
    <property type="match status" value="1"/>
</dbReference>
<dbReference type="FunFam" id="3.10.290.10:FF:000001">
    <property type="entry name" value="30S ribosomal protein S4"/>
    <property type="match status" value="1"/>
</dbReference>
<dbReference type="Gene3D" id="1.10.1050.10">
    <property type="entry name" value="Ribosomal Protein S4 Delta 41, Chain A, domain 1"/>
    <property type="match status" value="1"/>
</dbReference>
<dbReference type="Gene3D" id="3.10.290.10">
    <property type="entry name" value="RNA-binding S4 domain"/>
    <property type="match status" value="1"/>
</dbReference>
<dbReference type="HAMAP" id="MF_01306_B">
    <property type="entry name" value="Ribosomal_uS4_B"/>
    <property type="match status" value="1"/>
</dbReference>
<dbReference type="InterPro" id="IPR022801">
    <property type="entry name" value="Ribosomal_uS4"/>
</dbReference>
<dbReference type="InterPro" id="IPR005709">
    <property type="entry name" value="Ribosomal_uS4_bac-type"/>
</dbReference>
<dbReference type="InterPro" id="IPR018079">
    <property type="entry name" value="Ribosomal_uS4_CS"/>
</dbReference>
<dbReference type="InterPro" id="IPR001912">
    <property type="entry name" value="Ribosomal_uS4_N"/>
</dbReference>
<dbReference type="InterPro" id="IPR002942">
    <property type="entry name" value="S4_RNA-bd"/>
</dbReference>
<dbReference type="InterPro" id="IPR036986">
    <property type="entry name" value="S4_RNA-bd_sf"/>
</dbReference>
<dbReference type="NCBIfam" id="NF003717">
    <property type="entry name" value="PRK05327.1"/>
    <property type="match status" value="1"/>
</dbReference>
<dbReference type="NCBIfam" id="TIGR01017">
    <property type="entry name" value="rpsD_bact"/>
    <property type="match status" value="1"/>
</dbReference>
<dbReference type="PANTHER" id="PTHR11831">
    <property type="entry name" value="30S 40S RIBOSOMAL PROTEIN"/>
    <property type="match status" value="1"/>
</dbReference>
<dbReference type="PANTHER" id="PTHR11831:SF4">
    <property type="entry name" value="SMALL RIBOSOMAL SUBUNIT PROTEIN US4M"/>
    <property type="match status" value="1"/>
</dbReference>
<dbReference type="Pfam" id="PF00163">
    <property type="entry name" value="Ribosomal_S4"/>
    <property type="match status" value="1"/>
</dbReference>
<dbReference type="Pfam" id="PF01479">
    <property type="entry name" value="S4"/>
    <property type="match status" value="1"/>
</dbReference>
<dbReference type="SMART" id="SM01390">
    <property type="entry name" value="Ribosomal_S4"/>
    <property type="match status" value="1"/>
</dbReference>
<dbReference type="SMART" id="SM00363">
    <property type="entry name" value="S4"/>
    <property type="match status" value="1"/>
</dbReference>
<dbReference type="SUPFAM" id="SSF55174">
    <property type="entry name" value="Alpha-L RNA-binding motif"/>
    <property type="match status" value="1"/>
</dbReference>
<dbReference type="PROSITE" id="PS00632">
    <property type="entry name" value="RIBOSOMAL_S4"/>
    <property type="match status" value="1"/>
</dbReference>
<dbReference type="PROSITE" id="PS50889">
    <property type="entry name" value="S4"/>
    <property type="match status" value="1"/>
</dbReference>
<proteinExistence type="inferred from homology"/>
<gene>
    <name evidence="1" type="primary">rpsD</name>
    <name type="ordered locus">LACR_0300</name>
</gene>